<comment type="subunit">
    <text evidence="1">Part of the 50S ribosomal subunit.</text>
</comment>
<comment type="similarity">
    <text evidence="1">Belongs to the universal ribosomal protein uL30 family.</text>
</comment>
<accession>A5WCK8</accession>
<name>RL30_PSYWF</name>
<dbReference type="EMBL" id="CP000713">
    <property type="protein sequence ID" value="ABQ93399.1"/>
    <property type="molecule type" value="Genomic_DNA"/>
</dbReference>
<dbReference type="SMR" id="A5WCK8"/>
<dbReference type="STRING" id="349106.PsycPRwf_0444"/>
<dbReference type="KEGG" id="prw:PsycPRwf_0444"/>
<dbReference type="eggNOG" id="COG1841">
    <property type="taxonomic scope" value="Bacteria"/>
</dbReference>
<dbReference type="HOGENOM" id="CLU_131047_1_4_6"/>
<dbReference type="GO" id="GO:0022625">
    <property type="term" value="C:cytosolic large ribosomal subunit"/>
    <property type="evidence" value="ECO:0007669"/>
    <property type="project" value="TreeGrafter"/>
</dbReference>
<dbReference type="GO" id="GO:0003735">
    <property type="term" value="F:structural constituent of ribosome"/>
    <property type="evidence" value="ECO:0007669"/>
    <property type="project" value="InterPro"/>
</dbReference>
<dbReference type="GO" id="GO:0006412">
    <property type="term" value="P:translation"/>
    <property type="evidence" value="ECO:0007669"/>
    <property type="project" value="UniProtKB-UniRule"/>
</dbReference>
<dbReference type="CDD" id="cd01658">
    <property type="entry name" value="Ribosomal_L30"/>
    <property type="match status" value="1"/>
</dbReference>
<dbReference type="FunFam" id="3.30.1390.20:FF:000001">
    <property type="entry name" value="50S ribosomal protein L30"/>
    <property type="match status" value="1"/>
</dbReference>
<dbReference type="Gene3D" id="3.30.1390.20">
    <property type="entry name" value="Ribosomal protein L30, ferredoxin-like fold domain"/>
    <property type="match status" value="1"/>
</dbReference>
<dbReference type="HAMAP" id="MF_01371_B">
    <property type="entry name" value="Ribosomal_uL30_B"/>
    <property type="match status" value="1"/>
</dbReference>
<dbReference type="InterPro" id="IPR036919">
    <property type="entry name" value="Ribo_uL30_ferredoxin-like_sf"/>
</dbReference>
<dbReference type="InterPro" id="IPR005996">
    <property type="entry name" value="Ribosomal_uL30_bac-type"/>
</dbReference>
<dbReference type="InterPro" id="IPR016082">
    <property type="entry name" value="Ribosomal_uL30_ferredoxin-like"/>
</dbReference>
<dbReference type="NCBIfam" id="TIGR01308">
    <property type="entry name" value="rpmD_bact"/>
    <property type="match status" value="1"/>
</dbReference>
<dbReference type="PANTHER" id="PTHR15892:SF2">
    <property type="entry name" value="LARGE RIBOSOMAL SUBUNIT PROTEIN UL30M"/>
    <property type="match status" value="1"/>
</dbReference>
<dbReference type="PANTHER" id="PTHR15892">
    <property type="entry name" value="MITOCHONDRIAL RIBOSOMAL PROTEIN L30"/>
    <property type="match status" value="1"/>
</dbReference>
<dbReference type="Pfam" id="PF00327">
    <property type="entry name" value="Ribosomal_L30"/>
    <property type="match status" value="1"/>
</dbReference>
<dbReference type="PIRSF" id="PIRSF002211">
    <property type="entry name" value="Ribosomal_L30_bac-type"/>
    <property type="match status" value="1"/>
</dbReference>
<dbReference type="SUPFAM" id="SSF55129">
    <property type="entry name" value="Ribosomal protein L30p/L7e"/>
    <property type="match status" value="1"/>
</dbReference>
<sequence>MKTMKVTQIKSGAHRLKSHKACLMGLGLRRIGHTVEVEDTPSTRGMVNRINYMVKVEEA</sequence>
<evidence type="ECO:0000255" key="1">
    <source>
        <dbReference type="HAMAP-Rule" id="MF_01371"/>
    </source>
</evidence>
<evidence type="ECO:0000305" key="2"/>
<gene>
    <name evidence="1" type="primary">rpmD</name>
    <name type="ordered locus">PsycPRwf_0444</name>
</gene>
<feature type="chain" id="PRO_1000073452" description="Large ribosomal subunit protein uL30">
    <location>
        <begin position="1"/>
        <end position="59"/>
    </location>
</feature>
<keyword id="KW-0687">Ribonucleoprotein</keyword>
<keyword id="KW-0689">Ribosomal protein</keyword>
<protein>
    <recommendedName>
        <fullName evidence="1">Large ribosomal subunit protein uL30</fullName>
    </recommendedName>
    <alternativeName>
        <fullName evidence="2">50S ribosomal protein L30</fullName>
    </alternativeName>
</protein>
<proteinExistence type="inferred from homology"/>
<reference key="1">
    <citation type="submission" date="2007-05" db="EMBL/GenBank/DDBJ databases">
        <title>Complete sequence of chromosome of Psychrobacter sp. PRwf-1.</title>
        <authorList>
            <consortium name="US DOE Joint Genome Institute"/>
            <person name="Copeland A."/>
            <person name="Lucas S."/>
            <person name="Lapidus A."/>
            <person name="Barry K."/>
            <person name="Detter J.C."/>
            <person name="Glavina del Rio T."/>
            <person name="Hammon N."/>
            <person name="Israni S."/>
            <person name="Dalin E."/>
            <person name="Tice H."/>
            <person name="Pitluck S."/>
            <person name="Chain P."/>
            <person name="Malfatti S."/>
            <person name="Shin M."/>
            <person name="Vergez L."/>
            <person name="Schmutz J."/>
            <person name="Larimer F."/>
            <person name="Land M."/>
            <person name="Hauser L."/>
            <person name="Kyrpides N."/>
            <person name="Kim E."/>
            <person name="Tiedje J."/>
            <person name="Richardson P."/>
        </authorList>
    </citation>
    <scope>NUCLEOTIDE SEQUENCE [LARGE SCALE GENOMIC DNA]</scope>
    <source>
        <strain>PRwf-1</strain>
    </source>
</reference>
<organism>
    <name type="scientific">Psychrobacter sp. (strain PRwf-1)</name>
    <dbReference type="NCBI Taxonomy" id="349106"/>
    <lineage>
        <taxon>Bacteria</taxon>
        <taxon>Pseudomonadati</taxon>
        <taxon>Pseudomonadota</taxon>
        <taxon>Gammaproteobacteria</taxon>
        <taxon>Moraxellales</taxon>
        <taxon>Moraxellaceae</taxon>
        <taxon>Psychrobacter</taxon>
    </lineage>
</organism>